<sequence length="159" mass="17592">MIRFTQVINSEGRDNFTDRENCLIVCLTMDERTKSRLKVCLNNGDEAGLFLPRGTVLKEGDLLQAETGEIALVEAAEEVVSTAFTDDLLLLAKACYHLGNRHVPLQVELGWCRYLHDHVLDDMVKGLGLGVRVERAKYQPEPGAYGGSISGASHGHHHH</sequence>
<reference key="1">
    <citation type="journal article" date="2000" name="Infect. Immun.">
        <title>Genetic characterization of DNA region containing the trh and ure genes of Vibrio parahaemolyticus.</title>
        <authorList>
            <person name="Park K.-S."/>
            <person name="Iida T."/>
            <person name="Yamaichi Y."/>
            <person name="Oyagi T."/>
            <person name="Yamamoto K."/>
            <person name="Honda T."/>
        </authorList>
    </citation>
    <scope>NUCLEOTIDE SEQUENCE [GENOMIC DNA]</scope>
    <source>
        <strain>TH3996</strain>
    </source>
</reference>
<reference key="2">
    <citation type="journal article" date="2009" name="Infect. Immun.">
        <title>Identification and characterization of a novel type III secretion system in trh-positive Vibrio parahaemolyticus strain TH3996 reveal genetic lineage and diversity of pathogenic machinery beyond the species level.</title>
        <authorList>
            <person name="Okada N."/>
            <person name="Iida T."/>
            <person name="Park K.-S."/>
            <person name="Goto N."/>
            <person name="Yasunaga T."/>
            <person name="Hiyoshi H."/>
            <person name="Matsuda S."/>
            <person name="Kodama T."/>
            <person name="Honda T."/>
        </authorList>
    </citation>
    <scope>NUCLEOTIDE SEQUENCE [GENOMIC DNA]</scope>
    <source>
        <strain>TH3996</strain>
    </source>
</reference>
<comment type="function">
    <text evidence="1">Involved in urease metallocenter assembly. Binds nickel. Probably functions as a nickel donor during metallocenter assembly.</text>
</comment>
<comment type="subcellular location">
    <subcellularLocation>
        <location evidence="1">Cytoplasm</location>
    </subcellularLocation>
</comment>
<comment type="similarity">
    <text evidence="1">Belongs to the UreE family.</text>
</comment>
<proteinExistence type="inferred from homology"/>
<evidence type="ECO:0000255" key="1">
    <source>
        <dbReference type="HAMAP-Rule" id="MF_00822"/>
    </source>
</evidence>
<protein>
    <recommendedName>
        <fullName evidence="1">Urease accessory protein UreE</fullName>
    </recommendedName>
</protein>
<feature type="chain" id="PRO_0000223454" description="Urease accessory protein UreE">
    <location>
        <begin position="1"/>
        <end position="159"/>
    </location>
</feature>
<name>UREE_VIBPH</name>
<dbReference type="EMBL" id="AB455531">
    <property type="protein sequence ID" value="BAB13789.1"/>
    <property type="molecule type" value="Genomic_DNA"/>
</dbReference>
<dbReference type="SMR" id="Q9FAS4"/>
<dbReference type="GO" id="GO:0005737">
    <property type="term" value="C:cytoplasm"/>
    <property type="evidence" value="ECO:0007669"/>
    <property type="project" value="UniProtKB-SubCell"/>
</dbReference>
<dbReference type="GO" id="GO:0016151">
    <property type="term" value="F:nickel cation binding"/>
    <property type="evidence" value="ECO:0007669"/>
    <property type="project" value="UniProtKB-UniRule"/>
</dbReference>
<dbReference type="GO" id="GO:0051082">
    <property type="term" value="F:unfolded protein binding"/>
    <property type="evidence" value="ECO:0007669"/>
    <property type="project" value="UniProtKB-UniRule"/>
</dbReference>
<dbReference type="GO" id="GO:0006457">
    <property type="term" value="P:protein folding"/>
    <property type="evidence" value="ECO:0007669"/>
    <property type="project" value="InterPro"/>
</dbReference>
<dbReference type="GO" id="GO:0065003">
    <property type="term" value="P:protein-containing complex assembly"/>
    <property type="evidence" value="ECO:0007669"/>
    <property type="project" value="InterPro"/>
</dbReference>
<dbReference type="GO" id="GO:0019627">
    <property type="term" value="P:urea metabolic process"/>
    <property type="evidence" value="ECO:0007669"/>
    <property type="project" value="InterPro"/>
</dbReference>
<dbReference type="CDD" id="cd00571">
    <property type="entry name" value="UreE"/>
    <property type="match status" value="1"/>
</dbReference>
<dbReference type="Gene3D" id="2.60.260.20">
    <property type="entry name" value="Urease metallochaperone UreE, N-terminal domain"/>
    <property type="match status" value="1"/>
</dbReference>
<dbReference type="Gene3D" id="3.30.70.790">
    <property type="entry name" value="UreE, C-terminal domain"/>
    <property type="match status" value="1"/>
</dbReference>
<dbReference type="HAMAP" id="MF_00822">
    <property type="entry name" value="UreE"/>
    <property type="match status" value="1"/>
</dbReference>
<dbReference type="InterPro" id="IPR012406">
    <property type="entry name" value="UreE"/>
</dbReference>
<dbReference type="InterPro" id="IPR007864">
    <property type="entry name" value="UreE_C_dom"/>
</dbReference>
<dbReference type="InterPro" id="IPR004029">
    <property type="entry name" value="UreE_N"/>
</dbReference>
<dbReference type="InterPro" id="IPR036118">
    <property type="entry name" value="UreE_N_sf"/>
</dbReference>
<dbReference type="NCBIfam" id="NF009751">
    <property type="entry name" value="PRK13261.1-1"/>
    <property type="match status" value="1"/>
</dbReference>
<dbReference type="Pfam" id="PF05194">
    <property type="entry name" value="UreE_C"/>
    <property type="match status" value="1"/>
</dbReference>
<dbReference type="Pfam" id="PF02814">
    <property type="entry name" value="UreE_N"/>
    <property type="match status" value="1"/>
</dbReference>
<dbReference type="PIRSF" id="PIRSF036402">
    <property type="entry name" value="Ureas_acces_UreE"/>
    <property type="match status" value="1"/>
</dbReference>
<dbReference type="SMART" id="SM00988">
    <property type="entry name" value="UreE_N"/>
    <property type="match status" value="1"/>
</dbReference>
<dbReference type="SUPFAM" id="SSF69737">
    <property type="entry name" value="Urease metallochaperone UreE, C-terminal domain"/>
    <property type="match status" value="1"/>
</dbReference>
<dbReference type="SUPFAM" id="SSF69287">
    <property type="entry name" value="Urease metallochaperone UreE, N-terminal domain"/>
    <property type="match status" value="1"/>
</dbReference>
<gene>
    <name evidence="1" type="primary">ureE</name>
</gene>
<keyword id="KW-0143">Chaperone</keyword>
<keyword id="KW-0963">Cytoplasm</keyword>
<keyword id="KW-0533">Nickel</keyword>
<keyword id="KW-0996">Nickel insertion</keyword>
<organism>
    <name type="scientific">Vibrio parahaemolyticus</name>
    <dbReference type="NCBI Taxonomy" id="670"/>
    <lineage>
        <taxon>Bacteria</taxon>
        <taxon>Pseudomonadati</taxon>
        <taxon>Pseudomonadota</taxon>
        <taxon>Gammaproteobacteria</taxon>
        <taxon>Vibrionales</taxon>
        <taxon>Vibrionaceae</taxon>
        <taxon>Vibrio</taxon>
    </lineage>
</organism>
<accession>Q9FAS4</accession>